<reference key="1">
    <citation type="submission" date="2007-06" db="EMBL/GenBank/DDBJ databases">
        <authorList>
            <consortium name="NIH - Mammalian Gene Collection (MGC) project"/>
        </authorList>
    </citation>
    <scope>NUCLEOTIDE SEQUENCE [LARGE SCALE MRNA]</scope>
    <source>
        <strain>Hereford</strain>
        <tissue>Thymus</tissue>
    </source>
</reference>
<evidence type="ECO:0000250" key="1">
    <source>
        <dbReference type="UniProtKB" id="O15525"/>
    </source>
</evidence>
<evidence type="ECO:0000250" key="2">
    <source>
        <dbReference type="UniProtKB" id="O54790"/>
    </source>
</evidence>
<evidence type="ECO:0000250" key="3">
    <source>
        <dbReference type="UniProtKB" id="Q76MX4"/>
    </source>
</evidence>
<evidence type="ECO:0000255" key="4">
    <source>
        <dbReference type="PROSITE-ProRule" id="PRU00978"/>
    </source>
</evidence>
<evidence type="ECO:0000256" key="5">
    <source>
        <dbReference type="SAM" id="MobiDB-lite"/>
    </source>
</evidence>
<evidence type="ECO:0000305" key="6"/>
<name>MAFG_BOVIN</name>
<keyword id="KW-0007">Acetylation</keyword>
<keyword id="KW-0238">DNA-binding</keyword>
<keyword id="KW-1017">Isopeptide bond</keyword>
<keyword id="KW-0539">Nucleus</keyword>
<keyword id="KW-0597">Phosphoprotein</keyword>
<keyword id="KW-1185">Reference proteome</keyword>
<keyword id="KW-0678">Repressor</keyword>
<keyword id="KW-0804">Transcription</keyword>
<keyword id="KW-0805">Transcription regulation</keyword>
<keyword id="KW-0832">Ubl conjugation</keyword>
<comment type="function">
    <text evidence="1 3">Since they lack a putative transactivation domain, the small Mafs behave as transcriptional repressors when they dimerize among themselves. However, they seem to serve as transcriptional activators by dimerizing with other (usually larger) basic-zipper proteins, such as NFE2, NFE2L1 and NFE2L2, and recruiting them to specific DNA-binding sites. Small Maf proteins heterodimerize with Fos and may act as competitive repressors of the NFE2L2 transcription factor. Transcription factor, component of erythroid-specific transcription factor NFE2L2. Activates globin gene expression when associated with NFE2L2 (By similarity). May be involved in signal transduction of extracellular H(+) (By similarity).</text>
</comment>
<comment type="subunit">
    <text evidence="1">Homodimer or heterodimer. Homodimerization leads to transcriptional repression. Forms high affinity heterodimers with members of the CNC-bZIP family such as NFE2, NFE2L1/NRF1, NFE2L2/NRF2 and NFE2L3/NRF3. Interacts with CREBBP; the interaction leads to acetylation of the basic region of MAFG and stimulation of NFE2 transcriptional activity through increased DNA binding.</text>
</comment>
<comment type="subcellular location">
    <subcellularLocation>
        <location evidence="1 4">Nucleus</location>
    </subcellularLocation>
</comment>
<comment type="PTM">
    <text evidence="1">Acetylated in erythroid cells by CREB-binding protein (CBP). Acetylation augments the DNA-binding activity of NFE2, but has no effect on binding NFE2.</text>
</comment>
<comment type="PTM">
    <text evidence="2">Sumoylation at Lys-14 is required for active transcriptional repression.</text>
</comment>
<comment type="similarity">
    <text evidence="6">Belongs to the bZIP family. Maf subfamily.</text>
</comment>
<accession>A5PJV0</accession>
<dbReference type="EMBL" id="BC142248">
    <property type="protein sequence ID" value="AAI42249.1"/>
    <property type="molecule type" value="mRNA"/>
</dbReference>
<dbReference type="RefSeq" id="NP_001092450.1">
    <property type="nucleotide sequence ID" value="NM_001098980.1"/>
</dbReference>
<dbReference type="RefSeq" id="XP_005221100.1">
    <property type="nucleotide sequence ID" value="XM_005221043.5"/>
</dbReference>
<dbReference type="RefSeq" id="XP_005221101.1">
    <property type="nucleotide sequence ID" value="XM_005221044.5"/>
</dbReference>
<dbReference type="RefSeq" id="XP_005221102.1">
    <property type="nucleotide sequence ID" value="XM_005221045.5"/>
</dbReference>
<dbReference type="RefSeq" id="XP_059734011.1">
    <property type="nucleotide sequence ID" value="XM_059878028.1"/>
</dbReference>
<dbReference type="SMR" id="A5PJV0"/>
<dbReference type="FunCoup" id="A5PJV0">
    <property type="interactions" value="1085"/>
</dbReference>
<dbReference type="STRING" id="9913.ENSBTAP00000000044"/>
<dbReference type="PaxDb" id="9913-ENSBTAP00000000044"/>
<dbReference type="Ensembl" id="ENSBTAT00000000044.5">
    <property type="protein sequence ID" value="ENSBTAP00000000044.4"/>
    <property type="gene ID" value="ENSBTAG00000000040.6"/>
</dbReference>
<dbReference type="GeneID" id="515219"/>
<dbReference type="KEGG" id="bta:515219"/>
<dbReference type="CTD" id="4097"/>
<dbReference type="VEuPathDB" id="HostDB:ENSBTAG00000000040"/>
<dbReference type="VGNC" id="VGNC:31141">
    <property type="gene designation" value="MAFG"/>
</dbReference>
<dbReference type="eggNOG" id="KOG4196">
    <property type="taxonomic scope" value="Eukaryota"/>
</dbReference>
<dbReference type="GeneTree" id="ENSGT00940000160070"/>
<dbReference type="HOGENOM" id="CLU_112948_0_0_1"/>
<dbReference type="InParanoid" id="A5PJV0"/>
<dbReference type="OMA" id="QHSRYRF"/>
<dbReference type="OrthoDB" id="5974330at2759"/>
<dbReference type="TreeFam" id="TF325689"/>
<dbReference type="Reactome" id="R-BTA-983231">
    <property type="pathway name" value="Factors involved in megakaryocyte development and platelet production"/>
</dbReference>
<dbReference type="Proteomes" id="UP000009136">
    <property type="component" value="Chromosome 19"/>
</dbReference>
<dbReference type="Bgee" id="ENSBTAG00000000040">
    <property type="expression patterns" value="Expressed in triceps brachii and 104 other cell types or tissues"/>
</dbReference>
<dbReference type="GO" id="GO:0005634">
    <property type="term" value="C:nucleus"/>
    <property type="evidence" value="ECO:0000318"/>
    <property type="project" value="GO_Central"/>
</dbReference>
<dbReference type="GO" id="GO:0090575">
    <property type="term" value="C:RNA polymerase II transcription regulator complex"/>
    <property type="evidence" value="ECO:0007669"/>
    <property type="project" value="Ensembl"/>
</dbReference>
<dbReference type="GO" id="GO:0001228">
    <property type="term" value="F:DNA-binding transcription activator activity, RNA polymerase II-specific"/>
    <property type="evidence" value="ECO:0007669"/>
    <property type="project" value="Ensembl"/>
</dbReference>
<dbReference type="GO" id="GO:0000981">
    <property type="term" value="F:DNA-binding transcription factor activity, RNA polymerase II-specific"/>
    <property type="evidence" value="ECO:0000318"/>
    <property type="project" value="GO_Central"/>
</dbReference>
<dbReference type="GO" id="GO:0042802">
    <property type="term" value="F:identical protein binding"/>
    <property type="evidence" value="ECO:0007669"/>
    <property type="project" value="Ensembl"/>
</dbReference>
<dbReference type="GO" id="GO:0000978">
    <property type="term" value="F:RNA polymerase II cis-regulatory region sequence-specific DNA binding"/>
    <property type="evidence" value="ECO:0000318"/>
    <property type="project" value="GO_Central"/>
</dbReference>
<dbReference type="GO" id="GO:0030534">
    <property type="term" value="P:adult behavior"/>
    <property type="evidence" value="ECO:0007669"/>
    <property type="project" value="Ensembl"/>
</dbReference>
<dbReference type="GO" id="GO:0001701">
    <property type="term" value="P:in utero embryonic development"/>
    <property type="evidence" value="ECO:0007669"/>
    <property type="project" value="Ensembl"/>
</dbReference>
<dbReference type="GO" id="GO:0010628">
    <property type="term" value="P:positive regulation of gene expression"/>
    <property type="evidence" value="ECO:0007669"/>
    <property type="project" value="Ensembl"/>
</dbReference>
<dbReference type="GO" id="GO:0042127">
    <property type="term" value="P:regulation of cell population proliferation"/>
    <property type="evidence" value="ECO:0007669"/>
    <property type="project" value="Ensembl"/>
</dbReference>
<dbReference type="GO" id="GO:0045604">
    <property type="term" value="P:regulation of epidermal cell differentiation"/>
    <property type="evidence" value="ECO:0000318"/>
    <property type="project" value="GO_Central"/>
</dbReference>
<dbReference type="GO" id="GO:0006357">
    <property type="term" value="P:regulation of transcription by RNA polymerase II"/>
    <property type="evidence" value="ECO:0000318"/>
    <property type="project" value="GO_Central"/>
</dbReference>
<dbReference type="CDD" id="cd14717">
    <property type="entry name" value="bZIP_Maf_small"/>
    <property type="match status" value="1"/>
</dbReference>
<dbReference type="FunFam" id="1.20.5.170:FF:000011">
    <property type="entry name" value="Transcription factor MafG, putative"/>
    <property type="match status" value="1"/>
</dbReference>
<dbReference type="Gene3D" id="1.20.5.170">
    <property type="match status" value="1"/>
</dbReference>
<dbReference type="InterPro" id="IPR004827">
    <property type="entry name" value="bZIP"/>
</dbReference>
<dbReference type="InterPro" id="IPR004826">
    <property type="entry name" value="bZIP_Maf"/>
</dbReference>
<dbReference type="InterPro" id="IPR046347">
    <property type="entry name" value="bZIP_sf"/>
</dbReference>
<dbReference type="InterPro" id="IPR008917">
    <property type="entry name" value="TF_DNA-bd_sf"/>
</dbReference>
<dbReference type="InterPro" id="IPR024874">
    <property type="entry name" value="Transcription_factor_Maf_fam"/>
</dbReference>
<dbReference type="PANTHER" id="PTHR10129">
    <property type="entry name" value="TRANSCRIPTION FACTOR MAF"/>
    <property type="match status" value="1"/>
</dbReference>
<dbReference type="PANTHER" id="PTHR10129:SF15">
    <property type="entry name" value="TRANSCRIPTION FACTOR MAFG"/>
    <property type="match status" value="1"/>
</dbReference>
<dbReference type="Pfam" id="PF03131">
    <property type="entry name" value="bZIP_Maf"/>
    <property type="match status" value="1"/>
</dbReference>
<dbReference type="SMART" id="SM00338">
    <property type="entry name" value="BRLZ"/>
    <property type="match status" value="1"/>
</dbReference>
<dbReference type="SUPFAM" id="SSF47454">
    <property type="entry name" value="A DNA-binding domain in eukaryotic transcription factors"/>
    <property type="match status" value="1"/>
</dbReference>
<dbReference type="SUPFAM" id="SSF57959">
    <property type="entry name" value="Leucine zipper domain"/>
    <property type="match status" value="1"/>
</dbReference>
<dbReference type="PROSITE" id="PS50217">
    <property type="entry name" value="BZIP"/>
    <property type="match status" value="1"/>
</dbReference>
<protein>
    <recommendedName>
        <fullName>Transcription factor MafG</fullName>
    </recommendedName>
    <alternativeName>
        <fullName>V-maf musculoaponeurotic fibrosarcoma oncogene homolog G</fullName>
    </alternativeName>
</protein>
<proteinExistence type="evidence at transcript level"/>
<organism>
    <name type="scientific">Bos taurus</name>
    <name type="common">Bovine</name>
    <dbReference type="NCBI Taxonomy" id="9913"/>
    <lineage>
        <taxon>Eukaryota</taxon>
        <taxon>Metazoa</taxon>
        <taxon>Chordata</taxon>
        <taxon>Craniata</taxon>
        <taxon>Vertebrata</taxon>
        <taxon>Euteleostomi</taxon>
        <taxon>Mammalia</taxon>
        <taxon>Eutheria</taxon>
        <taxon>Laurasiatheria</taxon>
        <taxon>Artiodactyla</taxon>
        <taxon>Ruminantia</taxon>
        <taxon>Pecora</taxon>
        <taxon>Bovidae</taxon>
        <taxon>Bovinae</taxon>
        <taxon>Bos</taxon>
    </lineage>
</organism>
<gene>
    <name type="primary">MAFG</name>
</gene>
<sequence>MTTPNKGNKALKVKREPGENGTSLTDEELVTMSVRELNQHLRGLSKEEIIQLKQRRRTLKNRGYAASCRVKRVTQKEELEKQKAELQQEVEKLASENASMKLELDALRSKYEALQNFARTVARSPVAPARGPLAAGLGPLVPGKVAATSVITIVKSKTDARS</sequence>
<feature type="chain" id="PRO_0000370372" description="Transcription factor MafG">
    <location>
        <begin position="1"/>
        <end position="162"/>
    </location>
</feature>
<feature type="domain" description="bZIP" evidence="4">
    <location>
        <begin position="51"/>
        <end position="114"/>
    </location>
</feature>
<feature type="region of interest" description="Disordered" evidence="5">
    <location>
        <begin position="1"/>
        <end position="24"/>
    </location>
</feature>
<feature type="region of interest" description="Basic motif" evidence="4">
    <location>
        <begin position="53"/>
        <end position="76"/>
    </location>
</feature>
<feature type="region of interest" description="Leucine-zipper" evidence="4">
    <location>
        <begin position="79"/>
        <end position="93"/>
    </location>
</feature>
<feature type="modified residue" description="N6-acetyllysine" evidence="1">
    <location>
        <position position="53"/>
    </location>
</feature>
<feature type="modified residue" description="N6-acetyllysine" evidence="1">
    <location>
        <position position="60"/>
    </location>
</feature>
<feature type="modified residue" description="N6-acetyllysine" evidence="1">
    <location>
        <position position="71"/>
    </location>
</feature>
<feature type="modified residue" description="N6-acetyllysine" evidence="1">
    <location>
        <position position="76"/>
    </location>
</feature>
<feature type="modified residue" description="Phosphoserine" evidence="1">
    <location>
        <position position="124"/>
    </location>
</feature>
<feature type="cross-link" description="Glycyl lysine isopeptide (Lys-Gly) (interchain with G-Cter in SUMO); alternate" evidence="1">
    <location>
        <position position="14"/>
    </location>
</feature>
<feature type="cross-link" description="Glycyl lysine isopeptide (Lys-Gly) (interchain with G-Cter in SUMO2); alternate" evidence="1">
    <location>
        <position position="14"/>
    </location>
</feature>